<gene>
    <name evidence="3" type="primary">derriere</name>
    <name evidence="6" type="synonym">gdf3</name>
    <name type="ORF">TGas141f11.1</name>
</gene>
<accession>Q66KL4</accession>
<accession>Q28D13</accession>
<reference evidence="5 6" key="1">
    <citation type="submission" date="2004-08" db="EMBL/GenBank/DDBJ databases">
        <authorList>
            <consortium name="NIH - Xenopus Gene Collection (XGC) project"/>
        </authorList>
    </citation>
    <scope>NUCLEOTIDE SEQUENCE [LARGE SCALE MRNA]</scope>
    <source>
        <tissue evidence="6">Tail bud</tissue>
    </source>
</reference>
<reference evidence="5 6" key="2">
    <citation type="submission" date="2006-10" db="EMBL/GenBank/DDBJ databases">
        <authorList>
            <consortium name="Sanger Xenopus tropicalis EST/cDNA project"/>
        </authorList>
    </citation>
    <scope>NUCLEOTIDE SEQUENCE [LARGE SCALE MRNA] OF 108-350</scope>
    <source>
        <tissue evidence="7">Gastrula</tissue>
    </source>
</reference>
<organism>
    <name type="scientific">Xenopus tropicalis</name>
    <name type="common">Western clawed frog</name>
    <name type="synonym">Silurana tropicalis</name>
    <dbReference type="NCBI Taxonomy" id="8364"/>
    <lineage>
        <taxon>Eukaryota</taxon>
        <taxon>Metazoa</taxon>
        <taxon>Chordata</taxon>
        <taxon>Craniata</taxon>
        <taxon>Vertebrata</taxon>
        <taxon>Euteleostomi</taxon>
        <taxon>Amphibia</taxon>
        <taxon>Batrachia</taxon>
        <taxon>Anura</taxon>
        <taxon>Pipoidea</taxon>
        <taxon>Pipidae</taxon>
        <taxon>Xenopodinae</taxon>
        <taxon>Xenopus</taxon>
        <taxon>Silurana</taxon>
    </lineage>
</organism>
<evidence type="ECO:0000250" key="1"/>
<evidence type="ECO:0000250" key="2">
    <source>
        <dbReference type="UniProtKB" id="P09534"/>
    </source>
</evidence>
<evidence type="ECO:0000250" key="3">
    <source>
        <dbReference type="UniProtKB" id="Q9YGV1"/>
    </source>
</evidence>
<evidence type="ECO:0000255" key="4"/>
<evidence type="ECO:0000305" key="5"/>
<evidence type="ECO:0000312" key="6">
    <source>
        <dbReference type="EMBL" id="AAH80341.1"/>
    </source>
</evidence>
<evidence type="ECO:0000312" key="7">
    <source>
        <dbReference type="EMBL" id="CAJ81634.1"/>
    </source>
</evidence>
<protein>
    <recommendedName>
        <fullName>Derriere protein</fullName>
    </recommendedName>
    <alternativeName>
        <fullName>Growth/differentiation factor 3</fullName>
        <shortName>Gdf-3</shortName>
    </alternativeName>
</protein>
<comment type="function">
    <text evidence="3">Required for posterior mesoderm formation during embryogenesis. Acts indirectly to suppress head formation by altering mesodermal patterning. Also involved in the establishment of left-right axis asymmetry, acting upstream of nodal/nr-1. Can exert long-range effects in the embryo (By similarity).</text>
</comment>
<comment type="subunit">
    <text evidence="3">Homodimer; disulfide-linked. Also forms heterodimers with other TGF-beta family members including nodal2/nr-2 and bmp4 (By similarity).</text>
</comment>
<comment type="subcellular location">
    <subcellularLocation>
        <location evidence="1">Secreted</location>
    </subcellularLocation>
</comment>
<comment type="similarity">
    <text evidence="4">Belongs to the TGF-beta family.</text>
</comment>
<keyword id="KW-0165">Cleavage on pair of basic residues</keyword>
<keyword id="KW-0202">Cytokine</keyword>
<keyword id="KW-0217">Developmental protein</keyword>
<keyword id="KW-1015">Disulfide bond</keyword>
<keyword id="KW-0325">Glycoprotein</keyword>
<keyword id="KW-0339">Growth factor</keyword>
<keyword id="KW-1185">Reference proteome</keyword>
<keyword id="KW-0964">Secreted</keyword>
<keyword id="KW-0732">Signal</keyword>
<feature type="signal peptide" evidence="4">
    <location>
        <begin position="1"/>
        <end position="16"/>
    </location>
</feature>
<feature type="propeptide" id="PRO_0000274251" evidence="4">
    <location>
        <begin position="17"/>
        <end position="236"/>
    </location>
</feature>
<feature type="chain" id="PRO_0000274252" description="Derriere protein" evidence="4">
    <location>
        <begin position="237"/>
        <end position="350"/>
    </location>
</feature>
<feature type="glycosylation site" description="N-linked (GlcNAc...) asparagine" evidence="4">
    <location>
        <position position="171"/>
    </location>
</feature>
<feature type="glycosylation site" description="N-linked (GlcNAc...) asparagine" evidence="4">
    <location>
        <position position="202"/>
    </location>
</feature>
<feature type="disulfide bond" evidence="2">
    <location>
        <begin position="249"/>
        <end position="315"/>
    </location>
</feature>
<feature type="disulfide bond" evidence="2">
    <location>
        <begin position="278"/>
        <end position="347"/>
    </location>
</feature>
<feature type="disulfide bond" evidence="2">
    <location>
        <begin position="282"/>
        <end position="349"/>
    </location>
</feature>
<feature type="disulfide bond" description="Interchain" evidence="2">
    <location>
        <position position="314"/>
    </location>
</feature>
<feature type="sequence conflict" description="In Ref. 2; CAJ81634." evidence="5" ref="2">
    <original>NK</original>
    <variation>RG</variation>
    <location>
        <begin position="108"/>
        <end position="109"/>
    </location>
</feature>
<proteinExistence type="evidence at transcript level"/>
<sequence>MLSLACFFSFLLMVKSSPLTFQERMLLKALGLNTRPNPIAPGPVPKSLRDIFEKGINKDNPCMMEGFGVPGNIVRSYRDQGPVAAMEEPQESLCLKKFLFFDLSAVENKEQLTLGQLEIKFKHNSYYGQQFHLRLYRTLQLSLKGMRESKMNRKLLVSQSFRLLHKSLYFNLTKVAKDWKTPEKNMGLLLEIYASSKLAGDNRSFAVCEPIQSFIYTSLLTVSLDPSSCKTPRAKRSTHSSPPTPSNICKKRRLYIDFKDVGWQNWVIAPRGYMANYCYGECPYPLTEMLRGTNHAVLQTLVHSVEPESTPLPCCAPTKLSPISMLYYDNNDNVVLRHYEDMVVDECGCK</sequence>
<name>DERR_XENTR</name>
<dbReference type="EMBL" id="BC080341">
    <property type="protein sequence ID" value="AAH80341.1"/>
    <property type="molecule type" value="mRNA"/>
</dbReference>
<dbReference type="EMBL" id="CR855767">
    <property type="protein sequence ID" value="CAJ81634.1"/>
    <property type="molecule type" value="mRNA"/>
</dbReference>
<dbReference type="RefSeq" id="NP_001007905.1">
    <property type="nucleotide sequence ID" value="NM_001007904.1"/>
</dbReference>
<dbReference type="SMR" id="Q66KL4"/>
<dbReference type="FunCoup" id="Q66KL4">
    <property type="interactions" value="195"/>
</dbReference>
<dbReference type="STRING" id="8364.ENSXETP00000032655"/>
<dbReference type="GlyCosmos" id="Q66KL4">
    <property type="glycosylation" value="2 sites, No reported glycans"/>
</dbReference>
<dbReference type="PaxDb" id="8364-ENSXETP00000004454"/>
<dbReference type="DNASU" id="493288"/>
<dbReference type="GeneID" id="493288"/>
<dbReference type="KEGG" id="xtr:493288"/>
<dbReference type="AGR" id="Xenbase:XB-GENE-487309"/>
<dbReference type="CTD" id="9573"/>
<dbReference type="Xenbase" id="XB-GENE-487309">
    <property type="gene designation" value="gdf3"/>
</dbReference>
<dbReference type="eggNOG" id="KOG3900">
    <property type="taxonomic scope" value="Eukaryota"/>
</dbReference>
<dbReference type="HOGENOM" id="CLU_020515_4_0_1"/>
<dbReference type="InParanoid" id="Q66KL4"/>
<dbReference type="OMA" id="DWRTHSR"/>
<dbReference type="OrthoDB" id="5987191at2759"/>
<dbReference type="Proteomes" id="UP000008143">
    <property type="component" value="Chromosome 1"/>
</dbReference>
<dbReference type="GO" id="GO:0005576">
    <property type="term" value="C:extracellular region"/>
    <property type="evidence" value="ECO:0000250"/>
    <property type="project" value="UniProtKB"/>
</dbReference>
<dbReference type="GO" id="GO:0005615">
    <property type="term" value="C:extracellular space"/>
    <property type="evidence" value="ECO:0007669"/>
    <property type="project" value="UniProtKB-KW"/>
</dbReference>
<dbReference type="GO" id="GO:0005125">
    <property type="term" value="F:cytokine activity"/>
    <property type="evidence" value="ECO:0007669"/>
    <property type="project" value="UniProtKB-KW"/>
</dbReference>
<dbReference type="GO" id="GO:0008083">
    <property type="term" value="F:growth factor activity"/>
    <property type="evidence" value="ECO:0007669"/>
    <property type="project" value="UniProtKB-KW"/>
</dbReference>
<dbReference type="GO" id="GO:0016015">
    <property type="term" value="F:morphogen activity"/>
    <property type="evidence" value="ECO:0000250"/>
    <property type="project" value="UniProtKB"/>
</dbReference>
<dbReference type="GO" id="GO:0042803">
    <property type="term" value="F:protein homodimerization activity"/>
    <property type="evidence" value="ECO:0000250"/>
    <property type="project" value="UniProtKB"/>
</dbReference>
<dbReference type="GO" id="GO:0009952">
    <property type="term" value="P:anterior/posterior pattern specification"/>
    <property type="evidence" value="ECO:0000250"/>
    <property type="project" value="UniProtKB"/>
</dbReference>
<dbReference type="GO" id="GO:0007368">
    <property type="term" value="P:determination of left/right symmetry"/>
    <property type="evidence" value="ECO:0000250"/>
    <property type="project" value="UniProtKB"/>
</dbReference>
<dbReference type="GO" id="GO:0001707">
    <property type="term" value="P:mesoderm formation"/>
    <property type="evidence" value="ECO:0000250"/>
    <property type="project" value="UniProtKB"/>
</dbReference>
<dbReference type="CDD" id="cd13764">
    <property type="entry name" value="TGF_beta_GDF1_3_like"/>
    <property type="match status" value="1"/>
</dbReference>
<dbReference type="FunFam" id="2.10.90.10:FF:000001">
    <property type="entry name" value="Bone morphogenetic protein 4"/>
    <property type="match status" value="1"/>
</dbReference>
<dbReference type="FunFam" id="2.60.120.970:FF:000020">
    <property type="entry name" value="growth/differentiation factor 3"/>
    <property type="match status" value="1"/>
</dbReference>
<dbReference type="Gene3D" id="2.60.120.970">
    <property type="match status" value="1"/>
</dbReference>
<dbReference type="Gene3D" id="2.10.90.10">
    <property type="entry name" value="Cystine-knot cytokines"/>
    <property type="match status" value="1"/>
</dbReference>
<dbReference type="InterPro" id="IPR029034">
    <property type="entry name" value="Cystine-knot_cytokine"/>
</dbReference>
<dbReference type="InterPro" id="IPR001839">
    <property type="entry name" value="TGF-b_C"/>
</dbReference>
<dbReference type="InterPro" id="IPR001111">
    <property type="entry name" value="TGF-b_propeptide"/>
</dbReference>
<dbReference type="InterPro" id="IPR015615">
    <property type="entry name" value="TGF-beta-rel"/>
</dbReference>
<dbReference type="InterPro" id="IPR017948">
    <property type="entry name" value="TGFb_CS"/>
</dbReference>
<dbReference type="PANTHER" id="PTHR11848:SF300">
    <property type="entry name" value="CVG1 PROTEIN"/>
    <property type="match status" value="1"/>
</dbReference>
<dbReference type="PANTHER" id="PTHR11848">
    <property type="entry name" value="TGF-BETA FAMILY"/>
    <property type="match status" value="1"/>
</dbReference>
<dbReference type="Pfam" id="PF00019">
    <property type="entry name" value="TGF_beta"/>
    <property type="match status" value="1"/>
</dbReference>
<dbReference type="Pfam" id="PF00688">
    <property type="entry name" value="TGFb_propeptide"/>
    <property type="match status" value="1"/>
</dbReference>
<dbReference type="SMART" id="SM00204">
    <property type="entry name" value="TGFB"/>
    <property type="match status" value="1"/>
</dbReference>
<dbReference type="SUPFAM" id="SSF57501">
    <property type="entry name" value="Cystine-knot cytokines"/>
    <property type="match status" value="1"/>
</dbReference>
<dbReference type="PROSITE" id="PS00250">
    <property type="entry name" value="TGF_BETA_1"/>
    <property type="match status" value="1"/>
</dbReference>
<dbReference type="PROSITE" id="PS51362">
    <property type="entry name" value="TGF_BETA_2"/>
    <property type="match status" value="1"/>
</dbReference>